<evidence type="ECO:0000255" key="1"/>
<evidence type="ECO:0000305" key="2"/>
<name>TEX38_MOUSE</name>
<organism>
    <name type="scientific">Mus musculus</name>
    <name type="common">Mouse</name>
    <dbReference type="NCBI Taxonomy" id="10090"/>
    <lineage>
        <taxon>Eukaryota</taxon>
        <taxon>Metazoa</taxon>
        <taxon>Chordata</taxon>
        <taxon>Craniata</taxon>
        <taxon>Vertebrata</taxon>
        <taxon>Euteleostomi</taxon>
        <taxon>Mammalia</taxon>
        <taxon>Eutheria</taxon>
        <taxon>Euarchontoglires</taxon>
        <taxon>Glires</taxon>
        <taxon>Rodentia</taxon>
        <taxon>Myomorpha</taxon>
        <taxon>Muroidea</taxon>
        <taxon>Muridae</taxon>
        <taxon>Murinae</taxon>
        <taxon>Mus</taxon>
        <taxon>Mus</taxon>
    </lineage>
</organism>
<proteinExistence type="evidence at transcript level"/>
<gene>
    <name type="primary">Tex38</name>
</gene>
<dbReference type="EMBL" id="AK016041">
    <property type="protein sequence ID" value="BAB30090.1"/>
    <property type="molecule type" value="mRNA"/>
</dbReference>
<dbReference type="EMBL" id="AL626806">
    <property type="status" value="NOT_ANNOTATED_CDS"/>
    <property type="molecule type" value="Genomic_DNA"/>
</dbReference>
<dbReference type="CCDS" id="CCDS51274.1"/>
<dbReference type="RefSeq" id="NP_083472.1">
    <property type="nucleotide sequence ID" value="NM_029196.1"/>
</dbReference>
<dbReference type="SMR" id="A2A8T7"/>
<dbReference type="STRING" id="10090.ENSMUSP00000102131"/>
<dbReference type="iPTMnet" id="A2A8T7"/>
<dbReference type="PhosphoSitePlus" id="A2A8T7"/>
<dbReference type="PaxDb" id="10090-ENSMUSP00000102131"/>
<dbReference type="ProteomicsDB" id="263109"/>
<dbReference type="Antibodypedia" id="66742">
    <property type="antibodies" value="18 antibodies from 9 providers"/>
</dbReference>
<dbReference type="Ensembl" id="ENSMUST00000106521.2">
    <property type="protein sequence ID" value="ENSMUSP00000102131.2"/>
    <property type="gene ID" value="ENSMUSG00000044556.4"/>
</dbReference>
<dbReference type="GeneID" id="75173"/>
<dbReference type="KEGG" id="mmu:75173"/>
<dbReference type="UCSC" id="uc008ufi.2">
    <property type="organism name" value="mouse"/>
</dbReference>
<dbReference type="AGR" id="MGI:1922423"/>
<dbReference type="CTD" id="374973"/>
<dbReference type="MGI" id="MGI:1922423">
    <property type="gene designation" value="Tex38"/>
</dbReference>
<dbReference type="VEuPathDB" id="HostDB:ENSMUSG00000044556"/>
<dbReference type="eggNOG" id="ENOG502SFNG">
    <property type="taxonomic scope" value="Eukaryota"/>
</dbReference>
<dbReference type="GeneTree" id="ENSGT00390000016446"/>
<dbReference type="HOGENOM" id="CLU_092826_0_0_1"/>
<dbReference type="InParanoid" id="A2A8T7"/>
<dbReference type="OMA" id="HYGMNAA"/>
<dbReference type="OrthoDB" id="9439442at2759"/>
<dbReference type="TreeFam" id="TF337717"/>
<dbReference type="BioGRID-ORCS" id="75173">
    <property type="hits" value="1 hit in 75 CRISPR screens"/>
</dbReference>
<dbReference type="PRO" id="PR:A2A8T7"/>
<dbReference type="Proteomes" id="UP000000589">
    <property type="component" value="Chromosome 4"/>
</dbReference>
<dbReference type="RNAct" id="A2A8T7">
    <property type="molecule type" value="protein"/>
</dbReference>
<dbReference type="Bgee" id="ENSMUSG00000044556">
    <property type="expression patterns" value="Expressed in spermatid and 45 other cell types or tissues"/>
</dbReference>
<dbReference type="ExpressionAtlas" id="A2A8T7">
    <property type="expression patterns" value="baseline and differential"/>
</dbReference>
<dbReference type="GO" id="GO:0016020">
    <property type="term" value="C:membrane"/>
    <property type="evidence" value="ECO:0007669"/>
    <property type="project" value="UniProtKB-SubCell"/>
</dbReference>
<dbReference type="InterPro" id="IPR031677">
    <property type="entry name" value="TEX38"/>
</dbReference>
<dbReference type="PANTHER" id="PTHR37362">
    <property type="entry name" value="TESTIS-EXPRESSED PROTEIN 38"/>
    <property type="match status" value="1"/>
</dbReference>
<dbReference type="PANTHER" id="PTHR37362:SF1">
    <property type="entry name" value="TESTIS-EXPRESSED PROTEIN 38"/>
    <property type="match status" value="1"/>
</dbReference>
<dbReference type="Pfam" id="PF15834">
    <property type="entry name" value="THEG4"/>
    <property type="match status" value="1"/>
</dbReference>
<protein>
    <recommendedName>
        <fullName>Testis-expressed protein 38</fullName>
    </recommendedName>
    <alternativeName>
        <fullName>ATPAF1 antisense RNA 1</fullName>
    </alternativeName>
    <alternativeName>
        <fullName>ATPAF1 antisense gene protein 1</fullName>
    </alternativeName>
</protein>
<sequence>MWISLCIGFLGLCSVLIGSCILFLHWKKNLQREERAQQWVEVMRAATFTYSPLLYWINKRRYHGMNVAINTGPPPAVTKTEPEDQNSDSLWELDLSEGRNFVVQDSSPRGEASDLLQHVLGIPKQPQSSKMSQPRTDSPFPLPIFQEVPFALSLCHLPPMLNHSVSYPLANRPERNVPFCSLPTLAHGTNCFNAKPFALEL</sequence>
<accession>A2A8T7</accession>
<accession>Q9D4X3</accession>
<keyword id="KW-0472">Membrane</keyword>
<keyword id="KW-1185">Reference proteome</keyword>
<keyword id="KW-0812">Transmembrane</keyword>
<keyword id="KW-1133">Transmembrane helix</keyword>
<comment type="subcellular location">
    <subcellularLocation>
        <location evidence="2">Membrane</location>
        <topology evidence="2">Single-pass membrane protein</topology>
    </subcellularLocation>
</comment>
<reference key="1">
    <citation type="journal article" date="2005" name="Science">
        <title>The transcriptional landscape of the mammalian genome.</title>
        <authorList>
            <person name="Carninci P."/>
            <person name="Kasukawa T."/>
            <person name="Katayama S."/>
            <person name="Gough J."/>
            <person name="Frith M.C."/>
            <person name="Maeda N."/>
            <person name="Oyama R."/>
            <person name="Ravasi T."/>
            <person name="Lenhard B."/>
            <person name="Wells C."/>
            <person name="Kodzius R."/>
            <person name="Shimokawa K."/>
            <person name="Bajic V.B."/>
            <person name="Brenner S.E."/>
            <person name="Batalov S."/>
            <person name="Forrest A.R."/>
            <person name="Zavolan M."/>
            <person name="Davis M.J."/>
            <person name="Wilming L.G."/>
            <person name="Aidinis V."/>
            <person name="Allen J.E."/>
            <person name="Ambesi-Impiombato A."/>
            <person name="Apweiler R."/>
            <person name="Aturaliya R.N."/>
            <person name="Bailey T.L."/>
            <person name="Bansal M."/>
            <person name="Baxter L."/>
            <person name="Beisel K.W."/>
            <person name="Bersano T."/>
            <person name="Bono H."/>
            <person name="Chalk A.M."/>
            <person name="Chiu K.P."/>
            <person name="Choudhary V."/>
            <person name="Christoffels A."/>
            <person name="Clutterbuck D.R."/>
            <person name="Crowe M.L."/>
            <person name="Dalla E."/>
            <person name="Dalrymple B.P."/>
            <person name="de Bono B."/>
            <person name="Della Gatta G."/>
            <person name="di Bernardo D."/>
            <person name="Down T."/>
            <person name="Engstrom P."/>
            <person name="Fagiolini M."/>
            <person name="Faulkner G."/>
            <person name="Fletcher C.F."/>
            <person name="Fukushima T."/>
            <person name="Furuno M."/>
            <person name="Futaki S."/>
            <person name="Gariboldi M."/>
            <person name="Georgii-Hemming P."/>
            <person name="Gingeras T.R."/>
            <person name="Gojobori T."/>
            <person name="Green R.E."/>
            <person name="Gustincich S."/>
            <person name="Harbers M."/>
            <person name="Hayashi Y."/>
            <person name="Hensch T.K."/>
            <person name="Hirokawa N."/>
            <person name="Hill D."/>
            <person name="Huminiecki L."/>
            <person name="Iacono M."/>
            <person name="Ikeo K."/>
            <person name="Iwama A."/>
            <person name="Ishikawa T."/>
            <person name="Jakt M."/>
            <person name="Kanapin A."/>
            <person name="Katoh M."/>
            <person name="Kawasawa Y."/>
            <person name="Kelso J."/>
            <person name="Kitamura H."/>
            <person name="Kitano H."/>
            <person name="Kollias G."/>
            <person name="Krishnan S.P."/>
            <person name="Kruger A."/>
            <person name="Kummerfeld S.K."/>
            <person name="Kurochkin I.V."/>
            <person name="Lareau L.F."/>
            <person name="Lazarevic D."/>
            <person name="Lipovich L."/>
            <person name="Liu J."/>
            <person name="Liuni S."/>
            <person name="McWilliam S."/>
            <person name="Madan Babu M."/>
            <person name="Madera M."/>
            <person name="Marchionni L."/>
            <person name="Matsuda H."/>
            <person name="Matsuzawa S."/>
            <person name="Miki H."/>
            <person name="Mignone F."/>
            <person name="Miyake S."/>
            <person name="Morris K."/>
            <person name="Mottagui-Tabar S."/>
            <person name="Mulder N."/>
            <person name="Nakano N."/>
            <person name="Nakauchi H."/>
            <person name="Ng P."/>
            <person name="Nilsson R."/>
            <person name="Nishiguchi S."/>
            <person name="Nishikawa S."/>
            <person name="Nori F."/>
            <person name="Ohara O."/>
            <person name="Okazaki Y."/>
            <person name="Orlando V."/>
            <person name="Pang K.C."/>
            <person name="Pavan W.J."/>
            <person name="Pavesi G."/>
            <person name="Pesole G."/>
            <person name="Petrovsky N."/>
            <person name="Piazza S."/>
            <person name="Reed J."/>
            <person name="Reid J.F."/>
            <person name="Ring B.Z."/>
            <person name="Ringwald M."/>
            <person name="Rost B."/>
            <person name="Ruan Y."/>
            <person name="Salzberg S.L."/>
            <person name="Sandelin A."/>
            <person name="Schneider C."/>
            <person name="Schoenbach C."/>
            <person name="Sekiguchi K."/>
            <person name="Semple C.A."/>
            <person name="Seno S."/>
            <person name="Sessa L."/>
            <person name="Sheng Y."/>
            <person name="Shibata Y."/>
            <person name="Shimada H."/>
            <person name="Shimada K."/>
            <person name="Silva D."/>
            <person name="Sinclair B."/>
            <person name="Sperling S."/>
            <person name="Stupka E."/>
            <person name="Sugiura K."/>
            <person name="Sultana R."/>
            <person name="Takenaka Y."/>
            <person name="Taki K."/>
            <person name="Tammoja K."/>
            <person name="Tan S.L."/>
            <person name="Tang S."/>
            <person name="Taylor M.S."/>
            <person name="Tegner J."/>
            <person name="Teichmann S.A."/>
            <person name="Ueda H.R."/>
            <person name="van Nimwegen E."/>
            <person name="Verardo R."/>
            <person name="Wei C.L."/>
            <person name="Yagi K."/>
            <person name="Yamanishi H."/>
            <person name="Zabarovsky E."/>
            <person name="Zhu S."/>
            <person name="Zimmer A."/>
            <person name="Hide W."/>
            <person name="Bult C."/>
            <person name="Grimmond S.M."/>
            <person name="Teasdale R.D."/>
            <person name="Liu E.T."/>
            <person name="Brusic V."/>
            <person name="Quackenbush J."/>
            <person name="Wahlestedt C."/>
            <person name="Mattick J.S."/>
            <person name="Hume D.A."/>
            <person name="Kai C."/>
            <person name="Sasaki D."/>
            <person name="Tomaru Y."/>
            <person name="Fukuda S."/>
            <person name="Kanamori-Katayama M."/>
            <person name="Suzuki M."/>
            <person name="Aoki J."/>
            <person name="Arakawa T."/>
            <person name="Iida J."/>
            <person name="Imamura K."/>
            <person name="Itoh M."/>
            <person name="Kato T."/>
            <person name="Kawaji H."/>
            <person name="Kawagashira N."/>
            <person name="Kawashima T."/>
            <person name="Kojima M."/>
            <person name="Kondo S."/>
            <person name="Konno H."/>
            <person name="Nakano K."/>
            <person name="Ninomiya N."/>
            <person name="Nishio T."/>
            <person name="Okada M."/>
            <person name="Plessy C."/>
            <person name="Shibata K."/>
            <person name="Shiraki T."/>
            <person name="Suzuki S."/>
            <person name="Tagami M."/>
            <person name="Waki K."/>
            <person name="Watahiki A."/>
            <person name="Okamura-Oho Y."/>
            <person name="Suzuki H."/>
            <person name="Kawai J."/>
            <person name="Hayashizaki Y."/>
        </authorList>
    </citation>
    <scope>NUCLEOTIDE SEQUENCE [LARGE SCALE MRNA]</scope>
    <source>
        <strain>C57BL/6J</strain>
        <tissue>Testis</tissue>
    </source>
</reference>
<reference key="2">
    <citation type="journal article" date="2009" name="PLoS Biol.">
        <title>Lineage-specific biology revealed by a finished genome assembly of the mouse.</title>
        <authorList>
            <person name="Church D.M."/>
            <person name="Goodstadt L."/>
            <person name="Hillier L.W."/>
            <person name="Zody M.C."/>
            <person name="Goldstein S."/>
            <person name="She X."/>
            <person name="Bult C.J."/>
            <person name="Agarwala R."/>
            <person name="Cherry J.L."/>
            <person name="DiCuccio M."/>
            <person name="Hlavina W."/>
            <person name="Kapustin Y."/>
            <person name="Meric P."/>
            <person name="Maglott D."/>
            <person name="Birtle Z."/>
            <person name="Marques A.C."/>
            <person name="Graves T."/>
            <person name="Zhou S."/>
            <person name="Teague B."/>
            <person name="Potamousis K."/>
            <person name="Churas C."/>
            <person name="Place M."/>
            <person name="Herschleb J."/>
            <person name="Runnheim R."/>
            <person name="Forrest D."/>
            <person name="Amos-Landgraf J."/>
            <person name="Schwartz D.C."/>
            <person name="Cheng Z."/>
            <person name="Lindblad-Toh K."/>
            <person name="Eichler E.E."/>
            <person name="Ponting C.P."/>
        </authorList>
    </citation>
    <scope>NUCLEOTIDE SEQUENCE [LARGE SCALE GENOMIC DNA]</scope>
    <source>
        <strain>C57BL/6J</strain>
    </source>
</reference>
<feature type="chain" id="PRO_0000322539" description="Testis-expressed protein 38">
    <location>
        <begin position="1"/>
        <end position="201"/>
    </location>
</feature>
<feature type="transmembrane region" description="Helical" evidence="1">
    <location>
        <begin position="3"/>
        <end position="23"/>
    </location>
</feature>
<feature type="sequence conflict" description="In Ref. 1; BAB30090." evidence="2" ref="1">
    <original>E</original>
    <variation>V</variation>
    <location>
        <position position="41"/>
    </location>
</feature>